<gene>
    <name type="primary">Cpxm1</name>
    <name type="synonym">Cpx1</name>
    <name type="synonym">Cpxm</name>
</gene>
<proteinExistence type="evidence at transcript level"/>
<keyword id="KW-0121">Carboxypeptidase</keyword>
<keyword id="KW-1015">Disulfide bond</keyword>
<keyword id="KW-0325">Glycoprotein</keyword>
<keyword id="KW-0378">Hydrolase</keyword>
<keyword id="KW-0479">Metal-binding</keyword>
<keyword id="KW-0482">Metalloprotease</keyword>
<keyword id="KW-0645">Protease</keyword>
<keyword id="KW-1185">Reference proteome</keyword>
<keyword id="KW-0964">Secreted</keyword>
<keyword id="KW-0732">Signal</keyword>
<keyword id="KW-0862">Zinc</keyword>
<sequence length="722" mass="80907">MWGLLLAVTAFAPSVGLGLGAPSASVPGLAPGSTLAPHSSVAQPSTKANETSERHVRLRVIKKKKIVVKKRKKLRHPGPLGTARPVVPTHPAKTLTLPEKQEPGCPPLGLESLRVSDSQLEASSSQSFGLGAHRGRLNIQSGLEDGDLYDGAWCAEQQDTEPWLQVDAKNPVRFAGIVTQGRNSVWRYDWVTSFKVQFSNDSQTWWKSRNSTGMDIVFPANSDAETPVLNLLPEPQVARFIRLLPQTWFQGGAPCLRAEILACPVSDPNDLFPEAHTLGSSNSLDFRHHNYKAMRKLMKQVNEQCPNITRIYSIGKSHQGLKLYVMEMSDHPGEHELGEPEVRYVAGMHGNEALGRELLLLLMQFLCHEFLRGDPRVTRLLTETRIHLLPSMNPDGYETAYHRGSELVGWAEGRWTHQGIDLNHNFADLNTQLWYAEDDGLVPDTVPNHHLPLPTYYTLPNATVAPETWAVIKWMKRIPFVLSANLHGGELVVSYPFDMTRTPWAARELTPTPDDAVFRWLSTVYAGTNRAMQDTDRRPCHSQDFSLHGNVINGADWHTVPGSMNDFSYLHTNCFEVTVELSCDKFPHEKELPQEWENNKDALLTYLEQVRMGITGVVRDKDTELGIADAVIAVEGINHDVTTAWGGDYWRLLTPGDYVVTASAEGYHTVRQHCQVTFEEGPVPCNFLLTKTPKERLRELLATRGKLPPDLRRKLERLRGQK</sequence>
<dbReference type="EC" id="3.4.17.-"/>
<dbReference type="EMBL" id="AF077738">
    <property type="protein sequence ID" value="AAD15985.1"/>
    <property type="molecule type" value="mRNA"/>
</dbReference>
<dbReference type="EMBL" id="BX890605">
    <property type="status" value="NOT_ANNOTATED_CDS"/>
    <property type="molecule type" value="Genomic_DNA"/>
</dbReference>
<dbReference type="EMBL" id="CH466519">
    <property type="protein sequence ID" value="EDL28262.1"/>
    <property type="molecule type" value="Genomic_DNA"/>
</dbReference>
<dbReference type="EMBL" id="BC003713">
    <property type="protein sequence ID" value="AAH03713.1"/>
    <property type="molecule type" value="mRNA"/>
</dbReference>
<dbReference type="CCDS" id="CCDS16740.1"/>
<dbReference type="RefSeq" id="NP_062670.2">
    <property type="nucleotide sequence ID" value="NM_019696.2"/>
</dbReference>
<dbReference type="SMR" id="Q9Z100"/>
<dbReference type="BioGRID" id="207866">
    <property type="interactions" value="3"/>
</dbReference>
<dbReference type="FunCoup" id="Q9Z100">
    <property type="interactions" value="189"/>
</dbReference>
<dbReference type="STRING" id="10090.ENSMUSP00000028897"/>
<dbReference type="MEROPS" id="M14.015"/>
<dbReference type="GlyCosmos" id="Q9Z100">
    <property type="glycosylation" value="5 sites, No reported glycans"/>
</dbReference>
<dbReference type="GlyGen" id="Q9Z100">
    <property type="glycosylation" value="5 sites, 2 N-linked glycans (2 sites)"/>
</dbReference>
<dbReference type="iPTMnet" id="Q9Z100"/>
<dbReference type="PhosphoSitePlus" id="Q9Z100"/>
<dbReference type="PaxDb" id="10090-ENSMUSP00000028897"/>
<dbReference type="ProteomicsDB" id="283818"/>
<dbReference type="Antibodypedia" id="23301">
    <property type="antibodies" value="95 antibodies from 21 providers"/>
</dbReference>
<dbReference type="DNASU" id="56264"/>
<dbReference type="Ensembl" id="ENSMUST00000028897.8">
    <property type="protein sequence ID" value="ENSMUSP00000028897.8"/>
    <property type="gene ID" value="ENSMUSG00000027408.8"/>
</dbReference>
<dbReference type="GeneID" id="56264"/>
<dbReference type="KEGG" id="mmu:56264"/>
<dbReference type="UCSC" id="uc008mir.2">
    <property type="organism name" value="mouse"/>
</dbReference>
<dbReference type="AGR" id="MGI:1934569"/>
<dbReference type="CTD" id="56265"/>
<dbReference type="MGI" id="MGI:1934569">
    <property type="gene designation" value="Cpxm1"/>
</dbReference>
<dbReference type="VEuPathDB" id="HostDB:ENSMUSG00000027408"/>
<dbReference type="eggNOG" id="KOG2649">
    <property type="taxonomic scope" value="Eukaryota"/>
</dbReference>
<dbReference type="GeneTree" id="ENSGT00940000156141"/>
<dbReference type="HOGENOM" id="CLU_006722_4_0_1"/>
<dbReference type="InParanoid" id="Q9Z100"/>
<dbReference type="OMA" id="TDRRPCH"/>
<dbReference type="OrthoDB" id="10249045at2759"/>
<dbReference type="PhylomeDB" id="Q9Z100"/>
<dbReference type="TreeFam" id="TF315592"/>
<dbReference type="BioGRID-ORCS" id="56264">
    <property type="hits" value="4 hits in 80 CRISPR screens"/>
</dbReference>
<dbReference type="PRO" id="PR:Q9Z100"/>
<dbReference type="Proteomes" id="UP000000589">
    <property type="component" value="Chromosome 2"/>
</dbReference>
<dbReference type="RNAct" id="Q9Z100">
    <property type="molecule type" value="protein"/>
</dbReference>
<dbReference type="Bgee" id="ENSMUSG00000027408">
    <property type="expression patterns" value="Expressed in vault of skull and 227 other cell types or tissues"/>
</dbReference>
<dbReference type="GO" id="GO:0005615">
    <property type="term" value="C:extracellular space"/>
    <property type="evidence" value="ECO:0000314"/>
    <property type="project" value="MGI"/>
</dbReference>
<dbReference type="GO" id="GO:0008237">
    <property type="term" value="F:metallopeptidase activity"/>
    <property type="evidence" value="ECO:0007669"/>
    <property type="project" value="UniProtKB-KW"/>
</dbReference>
<dbReference type="GO" id="GO:0008270">
    <property type="term" value="F:zinc ion binding"/>
    <property type="evidence" value="ECO:0007669"/>
    <property type="project" value="InterPro"/>
</dbReference>
<dbReference type="CDD" id="cd00057">
    <property type="entry name" value="FA58C"/>
    <property type="match status" value="1"/>
</dbReference>
<dbReference type="CDD" id="cd03869">
    <property type="entry name" value="M14_CPX_like"/>
    <property type="match status" value="1"/>
</dbReference>
<dbReference type="CDD" id="cd11308">
    <property type="entry name" value="Peptidase_M14NE-CP-C_like"/>
    <property type="match status" value="1"/>
</dbReference>
<dbReference type="FunFam" id="3.40.630.10:FF:000007">
    <property type="entry name" value="Carboxypeptidase X (M14 family), member 1"/>
    <property type="match status" value="1"/>
</dbReference>
<dbReference type="FunFam" id="2.60.120.260:FF:000035">
    <property type="entry name" value="probable carboxypeptidase X1 isoform X2"/>
    <property type="match status" value="1"/>
</dbReference>
<dbReference type="FunFam" id="2.60.40.1120:FF:000012">
    <property type="entry name" value="probable carboxypeptidase X1 isoform X2"/>
    <property type="match status" value="1"/>
</dbReference>
<dbReference type="Gene3D" id="2.60.40.1120">
    <property type="entry name" value="Carboxypeptidase-like, regulatory domain"/>
    <property type="match status" value="1"/>
</dbReference>
<dbReference type="Gene3D" id="2.60.120.260">
    <property type="entry name" value="Galactose-binding domain-like"/>
    <property type="match status" value="1"/>
</dbReference>
<dbReference type="Gene3D" id="3.40.630.10">
    <property type="entry name" value="Zn peptidases"/>
    <property type="match status" value="1"/>
</dbReference>
<dbReference type="InterPro" id="IPR008969">
    <property type="entry name" value="CarboxyPept-like_regulatory"/>
</dbReference>
<dbReference type="InterPro" id="IPR000421">
    <property type="entry name" value="FA58C"/>
</dbReference>
<dbReference type="InterPro" id="IPR008979">
    <property type="entry name" value="Galactose-bd-like_sf"/>
</dbReference>
<dbReference type="InterPro" id="IPR000834">
    <property type="entry name" value="Peptidase_M14"/>
</dbReference>
<dbReference type="InterPro" id="IPR050753">
    <property type="entry name" value="Peptidase_M14_domain"/>
</dbReference>
<dbReference type="PANTHER" id="PTHR11532:SF43">
    <property type="entry name" value="CARBOXYPEPTIDASE X1-RELATED"/>
    <property type="match status" value="1"/>
</dbReference>
<dbReference type="PANTHER" id="PTHR11532">
    <property type="entry name" value="PROTEASE M14 CARBOXYPEPTIDASE"/>
    <property type="match status" value="1"/>
</dbReference>
<dbReference type="Pfam" id="PF13620">
    <property type="entry name" value="CarboxypepD_reg"/>
    <property type="match status" value="1"/>
</dbReference>
<dbReference type="Pfam" id="PF00754">
    <property type="entry name" value="F5_F8_type_C"/>
    <property type="match status" value="1"/>
</dbReference>
<dbReference type="Pfam" id="PF00246">
    <property type="entry name" value="Peptidase_M14"/>
    <property type="match status" value="1"/>
</dbReference>
<dbReference type="PRINTS" id="PR00765">
    <property type="entry name" value="CRBOXYPTASEA"/>
</dbReference>
<dbReference type="SMART" id="SM00231">
    <property type="entry name" value="FA58C"/>
    <property type="match status" value="1"/>
</dbReference>
<dbReference type="SMART" id="SM00631">
    <property type="entry name" value="Zn_pept"/>
    <property type="match status" value="1"/>
</dbReference>
<dbReference type="SUPFAM" id="SSF49464">
    <property type="entry name" value="Carboxypeptidase regulatory domain-like"/>
    <property type="match status" value="1"/>
</dbReference>
<dbReference type="SUPFAM" id="SSF49785">
    <property type="entry name" value="Galactose-binding domain-like"/>
    <property type="match status" value="1"/>
</dbReference>
<dbReference type="SUPFAM" id="SSF53187">
    <property type="entry name" value="Zn-dependent exopeptidases"/>
    <property type="match status" value="1"/>
</dbReference>
<dbReference type="PROSITE" id="PS00132">
    <property type="entry name" value="CARBOXYPEPT_ZN_1"/>
    <property type="match status" value="1"/>
</dbReference>
<dbReference type="PROSITE" id="PS00133">
    <property type="entry name" value="CARBOXYPEPT_ZN_2"/>
    <property type="match status" value="1"/>
</dbReference>
<dbReference type="PROSITE" id="PS01285">
    <property type="entry name" value="FA58C_1"/>
    <property type="match status" value="1"/>
</dbReference>
<dbReference type="PROSITE" id="PS50022">
    <property type="entry name" value="FA58C_3"/>
    <property type="match status" value="1"/>
</dbReference>
<dbReference type="PROSITE" id="PS52035">
    <property type="entry name" value="PEPTIDASE_M14"/>
    <property type="match status" value="1"/>
</dbReference>
<accession>Q9Z100</accession>
<accession>A2BI86</accession>
<accession>Q99LA3</accession>
<organism>
    <name type="scientific">Mus musculus</name>
    <name type="common">Mouse</name>
    <dbReference type="NCBI Taxonomy" id="10090"/>
    <lineage>
        <taxon>Eukaryota</taxon>
        <taxon>Metazoa</taxon>
        <taxon>Chordata</taxon>
        <taxon>Craniata</taxon>
        <taxon>Vertebrata</taxon>
        <taxon>Euteleostomi</taxon>
        <taxon>Mammalia</taxon>
        <taxon>Eutheria</taxon>
        <taxon>Euarchontoglires</taxon>
        <taxon>Glires</taxon>
        <taxon>Rodentia</taxon>
        <taxon>Myomorpha</taxon>
        <taxon>Muroidea</taxon>
        <taxon>Muridae</taxon>
        <taxon>Murinae</taxon>
        <taxon>Mus</taxon>
        <taxon>Mus</taxon>
    </lineage>
</organism>
<evidence type="ECO:0000250" key="1"/>
<evidence type="ECO:0000255" key="2"/>
<evidence type="ECO:0000255" key="3">
    <source>
        <dbReference type="PROSITE-ProRule" id="PRU00081"/>
    </source>
</evidence>
<evidence type="ECO:0000255" key="4">
    <source>
        <dbReference type="PROSITE-ProRule" id="PRU01379"/>
    </source>
</evidence>
<evidence type="ECO:0000256" key="5">
    <source>
        <dbReference type="SAM" id="MobiDB-lite"/>
    </source>
</evidence>
<evidence type="ECO:0000269" key="6">
    <source>
    </source>
</evidence>
<evidence type="ECO:0000305" key="7"/>
<feature type="signal peptide" evidence="2">
    <location>
        <begin position="1"/>
        <end position="20"/>
    </location>
</feature>
<feature type="chain" id="PRO_0000004408" description="Probable carboxypeptidase X1">
    <location>
        <begin position="21"/>
        <end position="722"/>
    </location>
</feature>
<feature type="domain" description="F5/8 type C" evidence="3">
    <location>
        <begin position="103"/>
        <end position="263"/>
    </location>
</feature>
<feature type="domain" description="Peptidase M14" evidence="4">
    <location>
        <begin position="287"/>
        <end position="610"/>
    </location>
</feature>
<feature type="region of interest" description="Disordered" evidence="5">
    <location>
        <begin position="30"/>
        <end position="54"/>
    </location>
</feature>
<feature type="compositionally biased region" description="Polar residues" evidence="5">
    <location>
        <begin position="36"/>
        <end position="49"/>
    </location>
</feature>
<feature type="active site" description="Proton donor/acceptor" evidence="4">
    <location>
        <position position="580"/>
    </location>
</feature>
<feature type="binding site" evidence="4">
    <location>
        <position position="349"/>
    </location>
    <ligand>
        <name>Zn(2+)</name>
        <dbReference type="ChEBI" id="CHEBI:29105"/>
        <note>catalytic</note>
    </ligand>
</feature>
<feature type="binding site" evidence="4">
    <location>
        <position position="352"/>
    </location>
    <ligand>
        <name>Zn(2+)</name>
        <dbReference type="ChEBI" id="CHEBI:29105"/>
        <note>catalytic</note>
    </ligand>
</feature>
<feature type="binding site" evidence="4">
    <location>
        <position position="487"/>
    </location>
    <ligand>
        <name>Zn(2+)</name>
        <dbReference type="ChEBI" id="CHEBI:29105"/>
        <note>catalytic</note>
    </ligand>
</feature>
<feature type="glycosylation site" description="N-linked (GlcNAc...) asparagine" evidence="2">
    <location>
        <position position="49"/>
    </location>
</feature>
<feature type="glycosylation site" description="N-linked (GlcNAc...) asparagine" evidence="2">
    <location>
        <position position="200"/>
    </location>
</feature>
<feature type="glycosylation site" description="N-linked (GlcNAc...) asparagine" evidence="2">
    <location>
        <position position="210"/>
    </location>
</feature>
<feature type="glycosylation site" description="N-linked (GlcNAc...) asparagine" evidence="2">
    <location>
        <position position="307"/>
    </location>
</feature>
<feature type="glycosylation site" description="N-linked (GlcNAc...) asparagine" evidence="2">
    <location>
        <position position="461"/>
    </location>
</feature>
<feature type="disulfide bond" evidence="3">
    <location>
        <begin position="105"/>
        <end position="263"/>
    </location>
</feature>
<feature type="sequence conflict" description="In Ref. 1; AAD15985." evidence="7" ref="1">
    <original>A</original>
    <variation>V</variation>
    <location>
        <position position="253"/>
    </location>
</feature>
<name>CPXM1_MOUSE</name>
<protein>
    <recommendedName>
        <fullName>Probable carboxypeptidase X1</fullName>
        <ecNumber>3.4.17.-</ecNumber>
    </recommendedName>
    <alternativeName>
        <fullName>Metallocarboxypeptidase CPX-1</fullName>
    </alternativeName>
</protein>
<reference key="1">
    <citation type="journal article" date="1999" name="DNA Cell Biol.">
        <title>Identification of mouse CPX-1, a novel member of the metallocarboxypeptidase gene family with highest similarity to CPX-2.</title>
        <authorList>
            <person name="Lei Y."/>
            <person name="Xin X."/>
            <person name="Morgan D."/>
            <person name="Pintar J.E."/>
            <person name="Fricker L.D."/>
        </authorList>
    </citation>
    <scope>NUCLEOTIDE SEQUENCE [MRNA]</scope>
    <scope>TISSUE SPECIFICITY</scope>
    <scope>DEVELOPMENTAL STAGE</scope>
    <source>
        <tissue>Heart</tissue>
    </source>
</reference>
<reference key="2">
    <citation type="journal article" date="2009" name="PLoS Biol.">
        <title>Lineage-specific biology revealed by a finished genome assembly of the mouse.</title>
        <authorList>
            <person name="Church D.M."/>
            <person name="Goodstadt L."/>
            <person name="Hillier L.W."/>
            <person name="Zody M.C."/>
            <person name="Goldstein S."/>
            <person name="She X."/>
            <person name="Bult C.J."/>
            <person name="Agarwala R."/>
            <person name="Cherry J.L."/>
            <person name="DiCuccio M."/>
            <person name="Hlavina W."/>
            <person name="Kapustin Y."/>
            <person name="Meric P."/>
            <person name="Maglott D."/>
            <person name="Birtle Z."/>
            <person name="Marques A.C."/>
            <person name="Graves T."/>
            <person name="Zhou S."/>
            <person name="Teague B."/>
            <person name="Potamousis K."/>
            <person name="Churas C."/>
            <person name="Place M."/>
            <person name="Herschleb J."/>
            <person name="Runnheim R."/>
            <person name="Forrest D."/>
            <person name="Amos-Landgraf J."/>
            <person name="Schwartz D.C."/>
            <person name="Cheng Z."/>
            <person name="Lindblad-Toh K."/>
            <person name="Eichler E.E."/>
            <person name="Ponting C.P."/>
        </authorList>
    </citation>
    <scope>NUCLEOTIDE SEQUENCE [LARGE SCALE GENOMIC DNA]</scope>
    <source>
        <strain>C57BL/6J</strain>
    </source>
</reference>
<reference key="3">
    <citation type="submission" date="2005-07" db="EMBL/GenBank/DDBJ databases">
        <authorList>
            <person name="Mural R.J."/>
            <person name="Adams M.D."/>
            <person name="Myers E.W."/>
            <person name="Smith H.O."/>
            <person name="Venter J.C."/>
        </authorList>
    </citation>
    <scope>NUCLEOTIDE SEQUENCE [LARGE SCALE GENOMIC DNA]</scope>
</reference>
<reference key="4">
    <citation type="journal article" date="2004" name="Genome Res.">
        <title>The status, quality, and expansion of the NIH full-length cDNA project: the Mammalian Gene Collection (MGC).</title>
        <authorList>
            <consortium name="The MGC Project Team"/>
        </authorList>
    </citation>
    <scope>NUCLEOTIDE SEQUENCE [LARGE SCALE MRNA]</scope>
    <source>
        <tissue>Mammary tumor</tissue>
    </source>
</reference>
<comment type="function">
    <text>May be involved in cell-cell interactions. No carboxypeptidase activity was found yet.</text>
</comment>
<comment type="cofactor">
    <cofactor evidence="1">
        <name>Zn(2+)</name>
        <dbReference type="ChEBI" id="CHEBI:29105"/>
    </cofactor>
    <text evidence="1">Binds 1 zinc ion per subunit.</text>
</comment>
<comment type="subcellular location">
    <subcellularLocation>
        <location evidence="7">Secreted</location>
    </subcellularLocation>
</comment>
<comment type="tissue specificity">
    <text evidence="6">Strongly expressed in testis and spleen. Moderately expressed in salivary gland, brain, heart, lung, and kidney. Extremely low expression in liver and muscle. No expression in eye, adrenal, and white adipose tissues.</text>
</comment>
<comment type="developmental stage">
    <text evidence="6">First expressed at 13.5 dpc, in the meninges, nasal mesenchyme, primordial cartilage and skeletal structures.</text>
</comment>
<comment type="similarity">
    <text evidence="7">Belongs to the peptidase M14 family.</text>
</comment>